<reference key="1">
    <citation type="submission" date="2007-03" db="EMBL/GenBank/DDBJ databases">
        <title>Sequence analysis of Arabidopsis pumila JS2 chloroplast DNA.</title>
        <authorList>
            <person name="Hosouchi T."/>
            <person name="Tsuruoka H."/>
            <person name="Kotani H."/>
        </authorList>
    </citation>
    <scope>NUCLEOTIDE SEQUENCE [LARGE SCALE GENOMIC DNA]</scope>
</reference>
<accession>A4QJT2</accession>
<feature type="chain" id="PRO_0000300052" description="Photosystem I P700 chlorophyll a apoprotein A2">
    <location>
        <begin position="1"/>
        <end position="734"/>
    </location>
</feature>
<feature type="transmembrane region" description="Helical; Name=I" evidence="1">
    <location>
        <begin position="46"/>
        <end position="69"/>
    </location>
</feature>
<feature type="transmembrane region" description="Helical; Name=II" evidence="1">
    <location>
        <begin position="135"/>
        <end position="158"/>
    </location>
</feature>
<feature type="transmembrane region" description="Helical; Name=III" evidence="1">
    <location>
        <begin position="175"/>
        <end position="199"/>
    </location>
</feature>
<feature type="transmembrane region" description="Helical; Name=IV" evidence="1">
    <location>
        <begin position="273"/>
        <end position="291"/>
    </location>
</feature>
<feature type="transmembrane region" description="Helical; Name=V" evidence="1">
    <location>
        <begin position="330"/>
        <end position="353"/>
    </location>
</feature>
<feature type="transmembrane region" description="Helical; Name=VI" evidence="1">
    <location>
        <begin position="369"/>
        <end position="395"/>
    </location>
</feature>
<feature type="transmembrane region" description="Helical; Name=VII" evidence="1">
    <location>
        <begin position="417"/>
        <end position="439"/>
    </location>
</feature>
<feature type="transmembrane region" description="Helical; Name=VIII" evidence="1">
    <location>
        <begin position="517"/>
        <end position="535"/>
    </location>
</feature>
<feature type="transmembrane region" description="Helical; Name=IX" evidence="1">
    <location>
        <begin position="575"/>
        <end position="596"/>
    </location>
</feature>
<feature type="transmembrane region" description="Helical; Name=X" evidence="1">
    <location>
        <begin position="643"/>
        <end position="665"/>
    </location>
</feature>
<feature type="transmembrane region" description="Helical; Name=XI" evidence="1">
    <location>
        <begin position="707"/>
        <end position="727"/>
    </location>
</feature>
<feature type="binding site" evidence="1">
    <location>
        <position position="559"/>
    </location>
    <ligand>
        <name>[4Fe-4S] cluster</name>
        <dbReference type="ChEBI" id="CHEBI:49883"/>
        <note>ligand shared between dimeric partners</note>
    </ligand>
</feature>
<feature type="binding site" evidence="1">
    <location>
        <position position="568"/>
    </location>
    <ligand>
        <name>[4Fe-4S] cluster</name>
        <dbReference type="ChEBI" id="CHEBI:49883"/>
        <note>ligand shared between dimeric partners</note>
    </ligand>
</feature>
<feature type="binding site" description="axial binding residue" evidence="1">
    <location>
        <position position="654"/>
    </location>
    <ligand>
        <name>chlorophyll a</name>
        <dbReference type="ChEBI" id="CHEBI:58416"/>
        <label>B1</label>
    </ligand>
    <ligandPart>
        <name>Mg</name>
        <dbReference type="ChEBI" id="CHEBI:25107"/>
    </ligandPart>
</feature>
<feature type="binding site" description="axial binding residue" evidence="1">
    <location>
        <position position="662"/>
    </location>
    <ligand>
        <name>chlorophyll a</name>
        <dbReference type="ChEBI" id="CHEBI:58416"/>
        <label>B3</label>
    </ligand>
    <ligandPart>
        <name>Mg</name>
        <dbReference type="ChEBI" id="CHEBI:25107"/>
    </ligandPart>
</feature>
<feature type="binding site" evidence="1">
    <location>
        <position position="670"/>
    </location>
    <ligand>
        <name>chlorophyll a</name>
        <dbReference type="ChEBI" id="CHEBI:58416"/>
        <label>B3</label>
    </ligand>
</feature>
<feature type="binding site" evidence="1">
    <location>
        <position position="671"/>
    </location>
    <ligand>
        <name>phylloquinone</name>
        <dbReference type="ChEBI" id="CHEBI:18067"/>
        <label>B</label>
    </ligand>
</feature>
<protein>
    <recommendedName>
        <fullName evidence="1">Photosystem I P700 chlorophyll a apoprotein A2</fullName>
        <ecNumber evidence="1">1.97.1.12</ecNumber>
    </recommendedName>
    <alternativeName>
        <fullName evidence="1">PSI-B</fullName>
    </alternativeName>
    <alternativeName>
        <fullName evidence="1">PsaB</fullName>
    </alternativeName>
</protein>
<name>PSAB_OLIPU</name>
<evidence type="ECO:0000255" key="1">
    <source>
        <dbReference type="HAMAP-Rule" id="MF_00482"/>
    </source>
</evidence>
<dbReference type="EC" id="1.97.1.12" evidence="1"/>
<dbReference type="EMBL" id="AP009368">
    <property type="protein sequence ID" value="BAF49938.1"/>
    <property type="molecule type" value="Genomic_DNA"/>
</dbReference>
<dbReference type="RefSeq" id="YP_001123114.1">
    <property type="nucleotide sequence ID" value="NC_009267.1"/>
</dbReference>
<dbReference type="SMR" id="A4QJT2"/>
<dbReference type="GeneID" id="4962459"/>
<dbReference type="GO" id="GO:0009535">
    <property type="term" value="C:chloroplast thylakoid membrane"/>
    <property type="evidence" value="ECO:0007669"/>
    <property type="project" value="UniProtKB-SubCell"/>
</dbReference>
<dbReference type="GO" id="GO:0009522">
    <property type="term" value="C:photosystem I"/>
    <property type="evidence" value="ECO:0007669"/>
    <property type="project" value="UniProtKB-KW"/>
</dbReference>
<dbReference type="GO" id="GO:0051539">
    <property type="term" value="F:4 iron, 4 sulfur cluster binding"/>
    <property type="evidence" value="ECO:0007669"/>
    <property type="project" value="UniProtKB-KW"/>
</dbReference>
<dbReference type="GO" id="GO:0016168">
    <property type="term" value="F:chlorophyll binding"/>
    <property type="evidence" value="ECO:0007669"/>
    <property type="project" value="UniProtKB-KW"/>
</dbReference>
<dbReference type="GO" id="GO:0009055">
    <property type="term" value="F:electron transfer activity"/>
    <property type="evidence" value="ECO:0007669"/>
    <property type="project" value="UniProtKB-UniRule"/>
</dbReference>
<dbReference type="GO" id="GO:0000287">
    <property type="term" value="F:magnesium ion binding"/>
    <property type="evidence" value="ECO:0007669"/>
    <property type="project" value="UniProtKB-UniRule"/>
</dbReference>
<dbReference type="GO" id="GO:0016491">
    <property type="term" value="F:oxidoreductase activity"/>
    <property type="evidence" value="ECO:0007669"/>
    <property type="project" value="UniProtKB-KW"/>
</dbReference>
<dbReference type="GO" id="GO:0015979">
    <property type="term" value="P:photosynthesis"/>
    <property type="evidence" value="ECO:0007669"/>
    <property type="project" value="UniProtKB-UniRule"/>
</dbReference>
<dbReference type="FunFam" id="1.20.1130.10:FF:000001">
    <property type="entry name" value="Photosystem I P700 chlorophyll a apoprotein A2"/>
    <property type="match status" value="1"/>
</dbReference>
<dbReference type="Gene3D" id="1.20.1130.10">
    <property type="entry name" value="Photosystem I PsaA/PsaB"/>
    <property type="match status" value="1"/>
</dbReference>
<dbReference type="HAMAP" id="MF_00482">
    <property type="entry name" value="PSI_PsaB"/>
    <property type="match status" value="1"/>
</dbReference>
<dbReference type="InterPro" id="IPR001280">
    <property type="entry name" value="PSI_PsaA/B"/>
</dbReference>
<dbReference type="InterPro" id="IPR020586">
    <property type="entry name" value="PSI_PsaA/B_CS"/>
</dbReference>
<dbReference type="InterPro" id="IPR036408">
    <property type="entry name" value="PSI_PsaA/B_sf"/>
</dbReference>
<dbReference type="InterPro" id="IPR006244">
    <property type="entry name" value="PSI_PsaB"/>
</dbReference>
<dbReference type="NCBIfam" id="TIGR01336">
    <property type="entry name" value="psaB"/>
    <property type="match status" value="1"/>
</dbReference>
<dbReference type="PANTHER" id="PTHR30128">
    <property type="entry name" value="OUTER MEMBRANE PROTEIN, OMPA-RELATED"/>
    <property type="match status" value="1"/>
</dbReference>
<dbReference type="PANTHER" id="PTHR30128:SF19">
    <property type="entry name" value="PHOTOSYSTEM I P700 CHLOROPHYLL A APOPROTEIN A1-RELATED"/>
    <property type="match status" value="1"/>
</dbReference>
<dbReference type="Pfam" id="PF00223">
    <property type="entry name" value="PsaA_PsaB"/>
    <property type="match status" value="1"/>
</dbReference>
<dbReference type="PIRSF" id="PIRSF002905">
    <property type="entry name" value="PSI_A"/>
    <property type="match status" value="1"/>
</dbReference>
<dbReference type="PRINTS" id="PR00257">
    <property type="entry name" value="PHOTSYSPSAAB"/>
</dbReference>
<dbReference type="SUPFAM" id="SSF81558">
    <property type="entry name" value="Photosystem I subunits PsaA/PsaB"/>
    <property type="match status" value="1"/>
</dbReference>
<dbReference type="PROSITE" id="PS00419">
    <property type="entry name" value="PHOTOSYSTEM_I_PSAAB"/>
    <property type="match status" value="1"/>
</dbReference>
<proteinExistence type="inferred from homology"/>
<comment type="function">
    <text evidence="1">PsaA and PsaB bind P700, the primary electron donor of photosystem I (PSI), as well as the electron acceptors A0, A1 and FX. PSI is a plastocyanin-ferredoxin oxidoreductase, converting photonic excitation into a charge separation, which transfers an electron from the donor P700 chlorophyll pair to the spectroscopically characterized acceptors A0, A1, FX, FA and FB in turn. Oxidized P700 is reduced on the lumenal side of the thylakoid membrane by plastocyanin.</text>
</comment>
<comment type="catalytic activity">
    <reaction evidence="1">
        <text>reduced [plastocyanin] + hnu + oxidized [2Fe-2S]-[ferredoxin] = oxidized [plastocyanin] + reduced [2Fe-2S]-[ferredoxin]</text>
        <dbReference type="Rhea" id="RHEA:30407"/>
        <dbReference type="Rhea" id="RHEA-COMP:10000"/>
        <dbReference type="Rhea" id="RHEA-COMP:10001"/>
        <dbReference type="Rhea" id="RHEA-COMP:10039"/>
        <dbReference type="Rhea" id="RHEA-COMP:10040"/>
        <dbReference type="ChEBI" id="CHEBI:29036"/>
        <dbReference type="ChEBI" id="CHEBI:30212"/>
        <dbReference type="ChEBI" id="CHEBI:33737"/>
        <dbReference type="ChEBI" id="CHEBI:33738"/>
        <dbReference type="ChEBI" id="CHEBI:49552"/>
        <dbReference type="EC" id="1.97.1.12"/>
    </reaction>
</comment>
<comment type="cofactor">
    <text evidence="1">P700 is a chlorophyll a/chlorophyll a' dimer, A0 is one or more chlorophyll a, A1 is one or both phylloquinones and FX is a shared 4Fe-4S iron-sulfur center.</text>
</comment>
<comment type="subunit">
    <text evidence="1">The PsaA/B heterodimer binds the P700 chlorophyll special pair and subsequent electron acceptors. PSI consists of a core antenna complex that captures photons, and an electron transfer chain that converts photonic excitation into a charge separation. The eukaryotic PSI reaction center is composed of at least 11 subunits.</text>
</comment>
<comment type="subcellular location">
    <subcellularLocation>
        <location evidence="1">Plastid</location>
        <location evidence="1">Chloroplast thylakoid membrane</location>
        <topology evidence="1">Multi-pass membrane protein</topology>
    </subcellularLocation>
</comment>
<comment type="similarity">
    <text evidence="1">Belongs to the PsaA/PsaB family.</text>
</comment>
<organism>
    <name type="scientific">Olimarabidopsis pumila</name>
    <name type="common">Dwarf rocket</name>
    <name type="synonym">Arabidopsis griffithiana</name>
    <dbReference type="NCBI Taxonomy" id="74718"/>
    <lineage>
        <taxon>Eukaryota</taxon>
        <taxon>Viridiplantae</taxon>
        <taxon>Streptophyta</taxon>
        <taxon>Embryophyta</taxon>
        <taxon>Tracheophyta</taxon>
        <taxon>Spermatophyta</taxon>
        <taxon>Magnoliopsida</taxon>
        <taxon>eudicotyledons</taxon>
        <taxon>Gunneridae</taxon>
        <taxon>Pentapetalae</taxon>
        <taxon>rosids</taxon>
        <taxon>malvids</taxon>
        <taxon>Brassicales</taxon>
        <taxon>Brassicaceae</taxon>
        <taxon>Alyssopsideae</taxon>
        <taxon>Olimarabidopsis</taxon>
    </lineage>
</organism>
<sequence length="734" mass="82399">MALRFPRFSQGLAQDPTTRRIWFGIATAHDFESHDDITEERLYQNIFASHFGQLAIIFLWTSGNLFHVAWQGNFETWVQDPLHVRPIAHAIWDPHFGQPAVEAFTRGGALGPVNIAYSGVYQWWYTIGLRTNEDLYTGALFLLFLSALSLIGGWLHLQPKWKPRVSWFKNAESRLNHHLSGLFGVSSLAWTGHLVHVAIPASRGESVRWNNFLNVLPHPQGLGPLFTGQWNLYAQNPDSSSHLFGTSQGSGTAILTLLGGFHPQTQSLWLTDMAHHHLAIAILFLIAGHMYRTNFGIGHSIKDLLEAHIPPGGRLGRGHKGLYDTINNSIHFQLGLALASLGVITSLVAQHMYSLPAYAFIAQDFTTQAALYTHHQYIAGFIMTGAFAHGAIFFIRDYNPEQNEDNVLARMLDHKEAIISHLSWASLFLGFHTLGLYVHNDVMLAFGTPEKQILIEPIFAQWIQSAHGKTSYGFDVLLSSTSGPAFNAGRSIWLPGWLNAINENSNSLFLTIGPGDFLVHHAIALGLHTTTLILVKGALDARGSKLMPDKKDFGYSFPCDGPGRGGTCDISAWDAFYLAVFWMLNTIGWVTFYWHWKHITLWQGNVSQFNESSTYLMGWLRDYLWLNSSQLINGYNPFGMNSLSVWAWMFLFGHLVWATGFMFLISWRGYWQELIETLAWAHERTPLANLIRWKDKPVALSIVQARLVGLAHFSVGYIFTYAAFLIASTSGKFG</sequence>
<gene>
    <name evidence="1" type="primary">psaB</name>
</gene>
<keyword id="KW-0004">4Fe-4S</keyword>
<keyword id="KW-0148">Chlorophyll</keyword>
<keyword id="KW-0150">Chloroplast</keyword>
<keyword id="KW-0157">Chromophore</keyword>
<keyword id="KW-0249">Electron transport</keyword>
<keyword id="KW-0408">Iron</keyword>
<keyword id="KW-0411">Iron-sulfur</keyword>
<keyword id="KW-0460">Magnesium</keyword>
<keyword id="KW-0472">Membrane</keyword>
<keyword id="KW-0479">Metal-binding</keyword>
<keyword id="KW-0560">Oxidoreductase</keyword>
<keyword id="KW-0602">Photosynthesis</keyword>
<keyword id="KW-0603">Photosystem I</keyword>
<keyword id="KW-0934">Plastid</keyword>
<keyword id="KW-0793">Thylakoid</keyword>
<keyword id="KW-0812">Transmembrane</keyword>
<keyword id="KW-1133">Transmembrane helix</keyword>
<keyword id="KW-0813">Transport</keyword>
<geneLocation type="chloroplast"/>